<name>DNJH_ATRNU</name>
<comment type="function">
    <text evidence="1">Plays a continuous role in plant development probably in the structural organization of compartments.</text>
</comment>
<comment type="subcellular location">
    <subcellularLocation>
        <location evidence="3">Membrane</location>
        <topology evidence="3">Lipid-anchor</topology>
    </subcellularLocation>
</comment>
<comment type="induction">
    <text>By heat shock, and in response to NaCl stress.</text>
</comment>
<sequence length="417" mass="46566">MFGRAPKKSDSTRYYEILGVPKDASPEDLKKAYKKAAIKNHPDKGGDPEKFKELAHAYEVLSDPEKREIYDQYGEDALKEGMGGGGGMHDPFDIFQSFFGGSPFGGVGSSRGRRQRRGEDVVHPLKVSLEDLFTGTTKKLSLSRNVICSKCTGKGSKSGASMKCSGCQGTGMKVSIRHLGPSMIQQMQHPCNECKGTGETINDKDRCPQCKGEKVVQEKKVLEVVVEKGMQHGQKITFPGEADEAPDTVTGDIVFVLQQKEHPKFKRKGEDLFYEHTLSLTEALCGFRFVLTHLDGRQLLIKSNLGEVVKPDQFKAIEDEGMPIYQRPFMKGKMYIHFTVEFPDSLNPDQVKSLEAILPPKPSMSLTYMELDECEETTLHNVNIEEEMKRKQTQAQQEAYDEDDEPAGGQRVQCAQQ</sequence>
<feature type="chain" id="PRO_0000071088" description="DnaJ protein homolog ANJ1">
    <location>
        <begin position="1"/>
        <end position="414"/>
    </location>
</feature>
<feature type="propeptide" id="PRO_0000396766" description="Removed in mature form" evidence="1">
    <location>
        <begin position="415"/>
        <end position="417"/>
    </location>
</feature>
<feature type="domain" description="J">
    <location>
        <begin position="11"/>
        <end position="76"/>
    </location>
</feature>
<feature type="repeat" description="CXXCXGXG motif">
    <location>
        <begin position="148"/>
        <end position="155"/>
    </location>
</feature>
<feature type="repeat" description="CXXCXGXG motif">
    <location>
        <begin position="164"/>
        <end position="171"/>
    </location>
</feature>
<feature type="repeat" description="CXXCXGXG motif">
    <location>
        <begin position="191"/>
        <end position="198"/>
    </location>
</feature>
<feature type="repeat" description="CXXCXGXG motif; approximate">
    <location>
        <begin position="207"/>
        <end position="214"/>
    </location>
</feature>
<feature type="zinc finger region" description="CR-type">
    <location>
        <begin position="135"/>
        <end position="219"/>
    </location>
</feature>
<feature type="region of interest" description="Disordered" evidence="2">
    <location>
        <begin position="384"/>
        <end position="417"/>
    </location>
</feature>
<feature type="modified residue" description="Cysteine methyl ester" evidence="1">
    <location>
        <position position="414"/>
    </location>
</feature>
<feature type="lipid moiety-binding region" description="S-farnesyl cysteine" evidence="1">
    <location>
        <position position="414"/>
    </location>
</feature>
<accession>P43644</accession>
<reference key="1">
    <citation type="journal article" date="1993" name="Plant Cell">
        <title>Expression of an Atriplex nummularia gene encoding a protein homologous to the bacterial molecular chaperone DnaJ.</title>
        <authorList>
            <person name="Zhu J.K."/>
            <person name="Shi J."/>
            <person name="Bressan R.A."/>
            <person name="Hasegawa P.M."/>
        </authorList>
    </citation>
    <scope>NUCLEOTIDE SEQUENCE [MRNA]</scope>
</reference>
<organism>
    <name type="scientific">Atriplex nummularia</name>
    <name type="common">Old man saltbush</name>
    <name type="synonym">Atriplex johnstonii</name>
    <dbReference type="NCBI Taxonomy" id="3553"/>
    <lineage>
        <taxon>Eukaryota</taxon>
        <taxon>Viridiplantae</taxon>
        <taxon>Streptophyta</taxon>
        <taxon>Embryophyta</taxon>
        <taxon>Tracheophyta</taxon>
        <taxon>Spermatophyta</taxon>
        <taxon>Magnoliopsida</taxon>
        <taxon>eudicotyledons</taxon>
        <taxon>Gunneridae</taxon>
        <taxon>Pentapetalae</taxon>
        <taxon>Caryophyllales</taxon>
        <taxon>Chenopodiaceae</taxon>
        <taxon>Chenopodioideae</taxon>
        <taxon>Atripliceae</taxon>
        <taxon>Atriplex</taxon>
    </lineage>
</organism>
<proteinExistence type="evidence at transcript level"/>
<dbReference type="EMBL" id="L09124">
    <property type="status" value="NOT_ANNOTATED_CDS"/>
    <property type="molecule type" value="mRNA"/>
</dbReference>
<dbReference type="PIR" id="JQ2142">
    <property type="entry name" value="JQ2142"/>
</dbReference>
<dbReference type="SMR" id="P43644"/>
<dbReference type="GO" id="GO:0016020">
    <property type="term" value="C:membrane"/>
    <property type="evidence" value="ECO:0007669"/>
    <property type="project" value="UniProtKB-SubCell"/>
</dbReference>
<dbReference type="GO" id="GO:0005524">
    <property type="term" value="F:ATP binding"/>
    <property type="evidence" value="ECO:0007669"/>
    <property type="project" value="InterPro"/>
</dbReference>
<dbReference type="GO" id="GO:0030544">
    <property type="term" value="F:Hsp70 protein binding"/>
    <property type="evidence" value="ECO:0007669"/>
    <property type="project" value="InterPro"/>
</dbReference>
<dbReference type="GO" id="GO:0051082">
    <property type="term" value="F:unfolded protein binding"/>
    <property type="evidence" value="ECO:0007669"/>
    <property type="project" value="InterPro"/>
</dbReference>
<dbReference type="GO" id="GO:0008270">
    <property type="term" value="F:zinc ion binding"/>
    <property type="evidence" value="ECO:0007669"/>
    <property type="project" value="UniProtKB-KW"/>
</dbReference>
<dbReference type="GO" id="GO:0006457">
    <property type="term" value="P:protein folding"/>
    <property type="evidence" value="ECO:0007669"/>
    <property type="project" value="InterPro"/>
</dbReference>
<dbReference type="GO" id="GO:0009408">
    <property type="term" value="P:response to heat"/>
    <property type="evidence" value="ECO:0007669"/>
    <property type="project" value="InterPro"/>
</dbReference>
<dbReference type="CDD" id="cd06257">
    <property type="entry name" value="DnaJ"/>
    <property type="match status" value="1"/>
</dbReference>
<dbReference type="CDD" id="cd10747">
    <property type="entry name" value="DnaJ_C"/>
    <property type="match status" value="1"/>
</dbReference>
<dbReference type="CDD" id="cd10719">
    <property type="entry name" value="DnaJ_zf"/>
    <property type="match status" value="1"/>
</dbReference>
<dbReference type="FunFam" id="2.60.260.20:FF:000068">
    <property type="entry name" value="Chaperone protein dnaJ 3"/>
    <property type="match status" value="1"/>
</dbReference>
<dbReference type="FunFam" id="1.10.287.110:FF:000012">
    <property type="entry name" value="dnaJ protein homolog"/>
    <property type="match status" value="1"/>
</dbReference>
<dbReference type="FunFam" id="2.10.230.10:FF:000001">
    <property type="entry name" value="DnaJ subfamily A member 2"/>
    <property type="match status" value="1"/>
</dbReference>
<dbReference type="FunFam" id="2.60.260.20:FF:000003">
    <property type="entry name" value="DnaJ subfamily A member 2"/>
    <property type="match status" value="1"/>
</dbReference>
<dbReference type="Gene3D" id="1.10.287.110">
    <property type="entry name" value="DnaJ domain"/>
    <property type="match status" value="1"/>
</dbReference>
<dbReference type="Gene3D" id="2.10.230.10">
    <property type="entry name" value="Heat shock protein DnaJ, cysteine-rich domain"/>
    <property type="match status" value="1"/>
</dbReference>
<dbReference type="Gene3D" id="2.60.260.20">
    <property type="entry name" value="Urease metallochaperone UreE, N-terminal domain"/>
    <property type="match status" value="2"/>
</dbReference>
<dbReference type="HAMAP" id="MF_01152">
    <property type="entry name" value="DnaJ"/>
    <property type="match status" value="1"/>
</dbReference>
<dbReference type="InterPro" id="IPR012724">
    <property type="entry name" value="DnaJ"/>
</dbReference>
<dbReference type="InterPro" id="IPR002939">
    <property type="entry name" value="DnaJ_C"/>
</dbReference>
<dbReference type="InterPro" id="IPR001623">
    <property type="entry name" value="DnaJ_domain"/>
</dbReference>
<dbReference type="InterPro" id="IPR018253">
    <property type="entry name" value="DnaJ_domain_CS"/>
</dbReference>
<dbReference type="InterPro" id="IPR044713">
    <property type="entry name" value="DNJA1/2-like"/>
</dbReference>
<dbReference type="InterPro" id="IPR008971">
    <property type="entry name" value="HSP40/DnaJ_pept-bd"/>
</dbReference>
<dbReference type="InterPro" id="IPR001305">
    <property type="entry name" value="HSP_DnaJ_Cys-rich_dom"/>
</dbReference>
<dbReference type="InterPro" id="IPR036410">
    <property type="entry name" value="HSP_DnaJ_Cys-rich_dom_sf"/>
</dbReference>
<dbReference type="InterPro" id="IPR036869">
    <property type="entry name" value="J_dom_sf"/>
</dbReference>
<dbReference type="PANTHER" id="PTHR43888">
    <property type="entry name" value="DNAJ-LIKE-2, ISOFORM A-RELATED"/>
    <property type="match status" value="1"/>
</dbReference>
<dbReference type="Pfam" id="PF00226">
    <property type="entry name" value="DnaJ"/>
    <property type="match status" value="1"/>
</dbReference>
<dbReference type="Pfam" id="PF01556">
    <property type="entry name" value="DnaJ_C"/>
    <property type="match status" value="1"/>
</dbReference>
<dbReference type="Pfam" id="PF00684">
    <property type="entry name" value="DnaJ_CXXCXGXG"/>
    <property type="match status" value="1"/>
</dbReference>
<dbReference type="PRINTS" id="PR00625">
    <property type="entry name" value="JDOMAIN"/>
</dbReference>
<dbReference type="SMART" id="SM00271">
    <property type="entry name" value="DnaJ"/>
    <property type="match status" value="1"/>
</dbReference>
<dbReference type="SUPFAM" id="SSF46565">
    <property type="entry name" value="Chaperone J-domain"/>
    <property type="match status" value="1"/>
</dbReference>
<dbReference type="SUPFAM" id="SSF57938">
    <property type="entry name" value="DnaJ/Hsp40 cysteine-rich domain"/>
    <property type="match status" value="1"/>
</dbReference>
<dbReference type="SUPFAM" id="SSF49493">
    <property type="entry name" value="HSP40/DnaJ peptide-binding domain"/>
    <property type="match status" value="2"/>
</dbReference>
<dbReference type="PROSITE" id="PS00636">
    <property type="entry name" value="DNAJ_1"/>
    <property type="match status" value="1"/>
</dbReference>
<dbReference type="PROSITE" id="PS50076">
    <property type="entry name" value="DNAJ_2"/>
    <property type="match status" value="1"/>
</dbReference>
<dbReference type="PROSITE" id="PS51188">
    <property type="entry name" value="ZF_CR"/>
    <property type="match status" value="1"/>
</dbReference>
<keyword id="KW-0143">Chaperone</keyword>
<keyword id="KW-0449">Lipoprotein</keyword>
<keyword id="KW-0472">Membrane</keyword>
<keyword id="KW-0479">Metal-binding</keyword>
<keyword id="KW-0488">Methylation</keyword>
<keyword id="KW-0636">Prenylation</keyword>
<keyword id="KW-0677">Repeat</keyword>
<keyword id="KW-0346">Stress response</keyword>
<keyword id="KW-0862">Zinc</keyword>
<keyword id="KW-0863">Zinc-finger</keyword>
<protein>
    <recommendedName>
        <fullName>DnaJ protein homolog ANJ1</fullName>
    </recommendedName>
</protein>
<evidence type="ECO:0000250" key="1"/>
<evidence type="ECO:0000256" key="2">
    <source>
        <dbReference type="SAM" id="MobiDB-lite"/>
    </source>
</evidence>
<evidence type="ECO:0000305" key="3"/>